<protein>
    <recommendedName>
        <fullName evidence="1">Succinyl-diaminopimelate desuccinylase</fullName>
        <shortName evidence="1">SDAP desuccinylase</shortName>
        <ecNumber evidence="1">3.5.1.18</ecNumber>
    </recommendedName>
    <alternativeName>
        <fullName evidence="1">N-succinyl-LL-2,6-diaminoheptanedioate amidohydrolase</fullName>
    </alternativeName>
</protein>
<organism>
    <name type="scientific">Cellvibrio japonicus (strain Ueda107)</name>
    <name type="common">Pseudomonas fluorescens subsp. cellulosa</name>
    <dbReference type="NCBI Taxonomy" id="498211"/>
    <lineage>
        <taxon>Bacteria</taxon>
        <taxon>Pseudomonadati</taxon>
        <taxon>Pseudomonadota</taxon>
        <taxon>Gammaproteobacteria</taxon>
        <taxon>Cellvibrionales</taxon>
        <taxon>Cellvibrionaceae</taxon>
        <taxon>Cellvibrio</taxon>
    </lineage>
</organism>
<gene>
    <name evidence="1" type="primary">dapE</name>
    <name type="ordered locus">CJA_1091</name>
</gene>
<accession>B3PBB9</accession>
<comment type="function">
    <text evidence="1">Catalyzes the hydrolysis of N-succinyl-L,L-diaminopimelic acid (SDAP), forming succinate and LL-2,6-diaminopimelate (DAP), an intermediate involved in the bacterial biosynthesis of lysine and meso-diaminopimelic acid, an essential component of bacterial cell walls.</text>
</comment>
<comment type="catalytic activity">
    <reaction evidence="1">
        <text>N-succinyl-(2S,6S)-2,6-diaminopimelate + H2O = (2S,6S)-2,6-diaminopimelate + succinate</text>
        <dbReference type="Rhea" id="RHEA:22608"/>
        <dbReference type="ChEBI" id="CHEBI:15377"/>
        <dbReference type="ChEBI" id="CHEBI:30031"/>
        <dbReference type="ChEBI" id="CHEBI:57609"/>
        <dbReference type="ChEBI" id="CHEBI:58087"/>
        <dbReference type="EC" id="3.5.1.18"/>
    </reaction>
</comment>
<comment type="cofactor">
    <cofactor evidence="1">
        <name>Zn(2+)</name>
        <dbReference type="ChEBI" id="CHEBI:29105"/>
    </cofactor>
    <cofactor evidence="1">
        <name>Co(2+)</name>
        <dbReference type="ChEBI" id="CHEBI:48828"/>
    </cofactor>
    <text evidence="1">Binds 2 Zn(2+) or Co(2+) ions per subunit.</text>
</comment>
<comment type="pathway">
    <text evidence="1">Amino-acid biosynthesis; L-lysine biosynthesis via DAP pathway; LL-2,6-diaminopimelate from (S)-tetrahydrodipicolinate (succinylase route): step 3/3.</text>
</comment>
<comment type="subunit">
    <text evidence="1">Homodimer.</text>
</comment>
<comment type="similarity">
    <text evidence="1">Belongs to the peptidase M20A family. DapE subfamily.</text>
</comment>
<comment type="sequence caution" evidence="2">
    <conflict type="erroneous initiation">
        <sequence resource="EMBL-CDS" id="ACE86138"/>
    </conflict>
</comment>
<keyword id="KW-0028">Amino-acid biosynthesis</keyword>
<keyword id="KW-0170">Cobalt</keyword>
<keyword id="KW-0220">Diaminopimelate biosynthesis</keyword>
<keyword id="KW-0378">Hydrolase</keyword>
<keyword id="KW-0457">Lysine biosynthesis</keyword>
<keyword id="KW-0479">Metal-binding</keyword>
<keyword id="KW-1185">Reference proteome</keyword>
<keyword id="KW-0862">Zinc</keyword>
<name>DAPE_CELJU</name>
<proteinExistence type="inferred from homology"/>
<reference key="1">
    <citation type="journal article" date="2008" name="J. Bacteriol.">
        <title>Insights into plant cell wall degradation from the genome sequence of the soil bacterium Cellvibrio japonicus.</title>
        <authorList>
            <person name="DeBoy R.T."/>
            <person name="Mongodin E.F."/>
            <person name="Fouts D.E."/>
            <person name="Tailford L.E."/>
            <person name="Khouri H."/>
            <person name="Emerson J.B."/>
            <person name="Mohamoud Y."/>
            <person name="Watkins K."/>
            <person name="Henrissat B."/>
            <person name="Gilbert H.J."/>
            <person name="Nelson K.E."/>
        </authorList>
    </citation>
    <scope>NUCLEOTIDE SEQUENCE [LARGE SCALE GENOMIC DNA]</scope>
    <source>
        <strain>Ueda107</strain>
    </source>
</reference>
<sequence length="382" mass="41347">MTPPATPLTPTLQLAHDLIRCRSVTPEDDGCQELMIRRLEAIGFKTERLRFGEVDNFWAIRGGDGPILAFAGHTDVVPTGPETHWNNPPFEPTIIDGMLHGRGAADMKGSLASMVVACENFVARHPNHKGRIAFLITSDEEGPSINGTVKVVEWLEARHTKMTWCIVGEPSSTTRVGDVIKNGRRGSLGGVLKVKGIQGHVAYPHLADNPIHTLAPALAELAAEHWDNGNEFFPATSFQVSNINGGTGATNVIPGEVTVVFNFRFSTELTDAILRERTQAILDKHELKYELEWILSGQPFLTPRGDLVNAVVDAINTATGLDAELSTSGGTSDGRFIAPTGAQVVELGPINATIHKVNECISAEDLNKLTAIYERTLEILLA</sequence>
<dbReference type="EC" id="3.5.1.18" evidence="1"/>
<dbReference type="EMBL" id="CP000934">
    <property type="protein sequence ID" value="ACE86138.1"/>
    <property type="status" value="ALT_INIT"/>
    <property type="molecule type" value="Genomic_DNA"/>
</dbReference>
<dbReference type="RefSeq" id="WP_041552017.1">
    <property type="nucleotide sequence ID" value="NC_010995.1"/>
</dbReference>
<dbReference type="SMR" id="B3PBB9"/>
<dbReference type="STRING" id="498211.CJA_1091"/>
<dbReference type="KEGG" id="cja:CJA_1091"/>
<dbReference type="eggNOG" id="COG0624">
    <property type="taxonomic scope" value="Bacteria"/>
</dbReference>
<dbReference type="HOGENOM" id="CLU_021802_4_0_6"/>
<dbReference type="OrthoDB" id="9809784at2"/>
<dbReference type="UniPathway" id="UPA00034">
    <property type="reaction ID" value="UER00021"/>
</dbReference>
<dbReference type="Proteomes" id="UP000001036">
    <property type="component" value="Chromosome"/>
</dbReference>
<dbReference type="GO" id="GO:0008777">
    <property type="term" value="F:acetylornithine deacetylase activity"/>
    <property type="evidence" value="ECO:0007669"/>
    <property type="project" value="TreeGrafter"/>
</dbReference>
<dbReference type="GO" id="GO:0050897">
    <property type="term" value="F:cobalt ion binding"/>
    <property type="evidence" value="ECO:0007669"/>
    <property type="project" value="UniProtKB-UniRule"/>
</dbReference>
<dbReference type="GO" id="GO:0009014">
    <property type="term" value="F:succinyl-diaminopimelate desuccinylase activity"/>
    <property type="evidence" value="ECO:0007669"/>
    <property type="project" value="UniProtKB-UniRule"/>
</dbReference>
<dbReference type="GO" id="GO:0008270">
    <property type="term" value="F:zinc ion binding"/>
    <property type="evidence" value="ECO:0007669"/>
    <property type="project" value="UniProtKB-UniRule"/>
</dbReference>
<dbReference type="GO" id="GO:0019877">
    <property type="term" value="P:diaminopimelate biosynthetic process"/>
    <property type="evidence" value="ECO:0007669"/>
    <property type="project" value="UniProtKB-UniRule"/>
</dbReference>
<dbReference type="GO" id="GO:0006526">
    <property type="term" value="P:L-arginine biosynthetic process"/>
    <property type="evidence" value="ECO:0007669"/>
    <property type="project" value="TreeGrafter"/>
</dbReference>
<dbReference type="GO" id="GO:0009089">
    <property type="term" value="P:lysine biosynthetic process via diaminopimelate"/>
    <property type="evidence" value="ECO:0007669"/>
    <property type="project" value="UniProtKB-UniRule"/>
</dbReference>
<dbReference type="CDD" id="cd03891">
    <property type="entry name" value="M20_DapE_proteobac"/>
    <property type="match status" value="1"/>
</dbReference>
<dbReference type="FunFam" id="3.30.70.360:FF:000011">
    <property type="entry name" value="Succinyl-diaminopimelate desuccinylase"/>
    <property type="match status" value="1"/>
</dbReference>
<dbReference type="FunFam" id="3.40.630.10:FF:000005">
    <property type="entry name" value="Succinyl-diaminopimelate desuccinylase"/>
    <property type="match status" value="1"/>
</dbReference>
<dbReference type="Gene3D" id="3.40.630.10">
    <property type="entry name" value="Zn peptidases"/>
    <property type="match status" value="2"/>
</dbReference>
<dbReference type="HAMAP" id="MF_01690">
    <property type="entry name" value="DapE"/>
    <property type="match status" value="1"/>
</dbReference>
<dbReference type="InterPro" id="IPR001261">
    <property type="entry name" value="ArgE/DapE_CS"/>
</dbReference>
<dbReference type="InterPro" id="IPR036264">
    <property type="entry name" value="Bact_exopeptidase_dim_dom"/>
</dbReference>
<dbReference type="InterPro" id="IPR005941">
    <property type="entry name" value="DapE_proteobac"/>
</dbReference>
<dbReference type="InterPro" id="IPR002933">
    <property type="entry name" value="Peptidase_M20"/>
</dbReference>
<dbReference type="InterPro" id="IPR011650">
    <property type="entry name" value="Peptidase_M20_dimer"/>
</dbReference>
<dbReference type="InterPro" id="IPR050072">
    <property type="entry name" value="Peptidase_M20A"/>
</dbReference>
<dbReference type="NCBIfam" id="TIGR01246">
    <property type="entry name" value="dapE_proteo"/>
    <property type="match status" value="1"/>
</dbReference>
<dbReference type="NCBIfam" id="NF009557">
    <property type="entry name" value="PRK13009.1"/>
    <property type="match status" value="1"/>
</dbReference>
<dbReference type="PANTHER" id="PTHR43808">
    <property type="entry name" value="ACETYLORNITHINE DEACETYLASE"/>
    <property type="match status" value="1"/>
</dbReference>
<dbReference type="PANTHER" id="PTHR43808:SF31">
    <property type="entry name" value="N-ACETYL-L-CITRULLINE DEACETYLASE"/>
    <property type="match status" value="1"/>
</dbReference>
<dbReference type="Pfam" id="PF07687">
    <property type="entry name" value="M20_dimer"/>
    <property type="match status" value="1"/>
</dbReference>
<dbReference type="Pfam" id="PF01546">
    <property type="entry name" value="Peptidase_M20"/>
    <property type="match status" value="1"/>
</dbReference>
<dbReference type="SUPFAM" id="SSF55031">
    <property type="entry name" value="Bacterial exopeptidase dimerisation domain"/>
    <property type="match status" value="1"/>
</dbReference>
<dbReference type="SUPFAM" id="SSF53187">
    <property type="entry name" value="Zn-dependent exopeptidases"/>
    <property type="match status" value="1"/>
</dbReference>
<dbReference type="PROSITE" id="PS00758">
    <property type="entry name" value="ARGE_DAPE_CPG2_1"/>
    <property type="match status" value="1"/>
</dbReference>
<dbReference type="PROSITE" id="PS00759">
    <property type="entry name" value="ARGE_DAPE_CPG2_2"/>
    <property type="match status" value="1"/>
</dbReference>
<evidence type="ECO:0000255" key="1">
    <source>
        <dbReference type="HAMAP-Rule" id="MF_01690"/>
    </source>
</evidence>
<evidence type="ECO:0000305" key="2"/>
<feature type="chain" id="PRO_0000375529" description="Succinyl-diaminopimelate desuccinylase">
    <location>
        <begin position="1"/>
        <end position="382"/>
    </location>
</feature>
<feature type="active site" evidence="1">
    <location>
        <position position="75"/>
    </location>
</feature>
<feature type="active site" description="Proton acceptor" evidence="1">
    <location>
        <position position="140"/>
    </location>
</feature>
<feature type="binding site" evidence="1">
    <location>
        <position position="73"/>
    </location>
    <ligand>
        <name>Zn(2+)</name>
        <dbReference type="ChEBI" id="CHEBI:29105"/>
        <label>1</label>
    </ligand>
</feature>
<feature type="binding site" evidence="1">
    <location>
        <position position="106"/>
    </location>
    <ligand>
        <name>Zn(2+)</name>
        <dbReference type="ChEBI" id="CHEBI:29105"/>
        <label>1</label>
    </ligand>
</feature>
<feature type="binding site" evidence="1">
    <location>
        <position position="106"/>
    </location>
    <ligand>
        <name>Zn(2+)</name>
        <dbReference type="ChEBI" id="CHEBI:29105"/>
        <label>2</label>
    </ligand>
</feature>
<feature type="binding site" evidence="1">
    <location>
        <position position="141"/>
    </location>
    <ligand>
        <name>Zn(2+)</name>
        <dbReference type="ChEBI" id="CHEBI:29105"/>
        <label>2</label>
    </ligand>
</feature>
<feature type="binding site" evidence="1">
    <location>
        <position position="169"/>
    </location>
    <ligand>
        <name>Zn(2+)</name>
        <dbReference type="ChEBI" id="CHEBI:29105"/>
        <label>1</label>
    </ligand>
</feature>
<feature type="binding site" evidence="1">
    <location>
        <position position="355"/>
    </location>
    <ligand>
        <name>Zn(2+)</name>
        <dbReference type="ChEBI" id="CHEBI:29105"/>
        <label>2</label>
    </ligand>
</feature>